<name>PTH_HAEIG</name>
<dbReference type="EC" id="3.1.1.29" evidence="1"/>
<dbReference type="EMBL" id="CP000672">
    <property type="protein sequence ID" value="ABQ99965.1"/>
    <property type="molecule type" value="Genomic_DNA"/>
</dbReference>
<dbReference type="SMR" id="A5UGR0"/>
<dbReference type="KEGG" id="hiq:CGSHiGG_05145"/>
<dbReference type="HOGENOM" id="CLU_062456_3_1_6"/>
<dbReference type="Proteomes" id="UP000001990">
    <property type="component" value="Chromosome"/>
</dbReference>
<dbReference type="GO" id="GO:0005737">
    <property type="term" value="C:cytoplasm"/>
    <property type="evidence" value="ECO:0007669"/>
    <property type="project" value="UniProtKB-SubCell"/>
</dbReference>
<dbReference type="GO" id="GO:0004045">
    <property type="term" value="F:peptidyl-tRNA hydrolase activity"/>
    <property type="evidence" value="ECO:0007669"/>
    <property type="project" value="UniProtKB-UniRule"/>
</dbReference>
<dbReference type="GO" id="GO:0000049">
    <property type="term" value="F:tRNA binding"/>
    <property type="evidence" value="ECO:0007669"/>
    <property type="project" value="UniProtKB-UniRule"/>
</dbReference>
<dbReference type="GO" id="GO:0006515">
    <property type="term" value="P:protein quality control for misfolded or incompletely synthesized proteins"/>
    <property type="evidence" value="ECO:0007669"/>
    <property type="project" value="UniProtKB-UniRule"/>
</dbReference>
<dbReference type="GO" id="GO:0072344">
    <property type="term" value="P:rescue of stalled ribosome"/>
    <property type="evidence" value="ECO:0007669"/>
    <property type="project" value="UniProtKB-UniRule"/>
</dbReference>
<dbReference type="CDD" id="cd00462">
    <property type="entry name" value="PTH"/>
    <property type="match status" value="1"/>
</dbReference>
<dbReference type="FunFam" id="3.40.50.1470:FF:000001">
    <property type="entry name" value="Peptidyl-tRNA hydrolase"/>
    <property type="match status" value="1"/>
</dbReference>
<dbReference type="Gene3D" id="3.40.50.1470">
    <property type="entry name" value="Peptidyl-tRNA hydrolase"/>
    <property type="match status" value="1"/>
</dbReference>
<dbReference type="HAMAP" id="MF_00083">
    <property type="entry name" value="Pept_tRNA_hydro_bact"/>
    <property type="match status" value="1"/>
</dbReference>
<dbReference type="InterPro" id="IPR001328">
    <property type="entry name" value="Pept_tRNA_hydro"/>
</dbReference>
<dbReference type="InterPro" id="IPR018171">
    <property type="entry name" value="Pept_tRNA_hydro_CS"/>
</dbReference>
<dbReference type="InterPro" id="IPR036416">
    <property type="entry name" value="Pept_tRNA_hydro_sf"/>
</dbReference>
<dbReference type="NCBIfam" id="TIGR00447">
    <property type="entry name" value="pth"/>
    <property type="match status" value="1"/>
</dbReference>
<dbReference type="PANTHER" id="PTHR17224">
    <property type="entry name" value="PEPTIDYL-TRNA HYDROLASE"/>
    <property type="match status" value="1"/>
</dbReference>
<dbReference type="PANTHER" id="PTHR17224:SF1">
    <property type="entry name" value="PEPTIDYL-TRNA HYDROLASE"/>
    <property type="match status" value="1"/>
</dbReference>
<dbReference type="Pfam" id="PF01195">
    <property type="entry name" value="Pept_tRNA_hydro"/>
    <property type="match status" value="1"/>
</dbReference>
<dbReference type="SUPFAM" id="SSF53178">
    <property type="entry name" value="Peptidyl-tRNA hydrolase-like"/>
    <property type="match status" value="1"/>
</dbReference>
<dbReference type="PROSITE" id="PS01195">
    <property type="entry name" value="PEPT_TRNA_HYDROL_1"/>
    <property type="match status" value="1"/>
</dbReference>
<dbReference type="PROSITE" id="PS01196">
    <property type="entry name" value="PEPT_TRNA_HYDROL_2"/>
    <property type="match status" value="1"/>
</dbReference>
<proteinExistence type="inferred from homology"/>
<organism>
    <name type="scientific">Haemophilus influenzae (strain PittGG)</name>
    <dbReference type="NCBI Taxonomy" id="374931"/>
    <lineage>
        <taxon>Bacteria</taxon>
        <taxon>Pseudomonadati</taxon>
        <taxon>Pseudomonadota</taxon>
        <taxon>Gammaproteobacteria</taxon>
        <taxon>Pasteurellales</taxon>
        <taxon>Pasteurellaceae</taxon>
        <taxon>Haemophilus</taxon>
    </lineage>
</organism>
<evidence type="ECO:0000255" key="1">
    <source>
        <dbReference type="HAMAP-Rule" id="MF_00083"/>
    </source>
</evidence>
<accession>A5UGR0</accession>
<gene>
    <name evidence="1" type="primary">pth</name>
    <name type="ordered locus">CGSHiGG_05145</name>
</gene>
<comment type="function">
    <text evidence="1">Hydrolyzes ribosome-free peptidyl-tRNAs (with 1 or more amino acids incorporated), which drop off the ribosome during protein synthesis, or as a result of ribosome stalling.</text>
</comment>
<comment type="function">
    <text evidence="1">Catalyzes the release of premature peptidyl moieties from peptidyl-tRNA molecules trapped in stalled 50S ribosomal subunits, and thus maintains levels of free tRNAs and 50S ribosomes.</text>
</comment>
<comment type="catalytic activity">
    <reaction evidence="1">
        <text>an N-acyl-L-alpha-aminoacyl-tRNA + H2O = an N-acyl-L-amino acid + a tRNA + H(+)</text>
        <dbReference type="Rhea" id="RHEA:54448"/>
        <dbReference type="Rhea" id="RHEA-COMP:10123"/>
        <dbReference type="Rhea" id="RHEA-COMP:13883"/>
        <dbReference type="ChEBI" id="CHEBI:15377"/>
        <dbReference type="ChEBI" id="CHEBI:15378"/>
        <dbReference type="ChEBI" id="CHEBI:59874"/>
        <dbReference type="ChEBI" id="CHEBI:78442"/>
        <dbReference type="ChEBI" id="CHEBI:138191"/>
        <dbReference type="EC" id="3.1.1.29"/>
    </reaction>
</comment>
<comment type="subunit">
    <text evidence="1">Monomer.</text>
</comment>
<comment type="subcellular location">
    <subcellularLocation>
        <location evidence="1">Cytoplasm</location>
    </subcellularLocation>
</comment>
<comment type="similarity">
    <text evidence="1">Belongs to the PTH family.</text>
</comment>
<keyword id="KW-0963">Cytoplasm</keyword>
<keyword id="KW-0378">Hydrolase</keyword>
<keyword id="KW-0694">RNA-binding</keyword>
<keyword id="KW-0820">tRNA-binding</keyword>
<sequence>MSEIKLIVGLGNPGEKYADTRHNAGEWLIERLARRFNVSLNPESKFFGKTVRTLVNGKEVRLLVPTTFMNLSGKAVGALASFYRIKPEEILVIHDELDLPAGTAKLKQGGGHGGHNGLKDIVAQLGNNNNFYRLRIGIGHPGHRDLVAGYVLNKPSPADRNALEKVLDEATDCVEMIFKDGMIKATNRLNSFKI</sequence>
<reference key="1">
    <citation type="journal article" date="2007" name="Genome Biol.">
        <title>Characterization and modeling of the Haemophilus influenzae core and supragenomes based on the complete genomic sequences of Rd and 12 clinical nontypeable strains.</title>
        <authorList>
            <person name="Hogg J.S."/>
            <person name="Hu F.Z."/>
            <person name="Janto B."/>
            <person name="Boissy R."/>
            <person name="Hayes J."/>
            <person name="Keefe R."/>
            <person name="Post J.C."/>
            <person name="Ehrlich G.D."/>
        </authorList>
    </citation>
    <scope>NUCLEOTIDE SEQUENCE [LARGE SCALE GENOMIC DNA]</scope>
    <source>
        <strain>PittGG</strain>
    </source>
</reference>
<feature type="chain" id="PRO_1000010594" description="Peptidyl-tRNA hydrolase">
    <location>
        <begin position="1"/>
        <end position="194"/>
    </location>
</feature>
<feature type="active site" description="Proton acceptor" evidence="1">
    <location>
        <position position="22"/>
    </location>
</feature>
<feature type="binding site" evidence="1">
    <location>
        <position position="17"/>
    </location>
    <ligand>
        <name>tRNA</name>
        <dbReference type="ChEBI" id="CHEBI:17843"/>
    </ligand>
</feature>
<feature type="binding site" evidence="1">
    <location>
        <position position="68"/>
    </location>
    <ligand>
        <name>tRNA</name>
        <dbReference type="ChEBI" id="CHEBI:17843"/>
    </ligand>
</feature>
<feature type="binding site" evidence="1">
    <location>
        <position position="70"/>
    </location>
    <ligand>
        <name>tRNA</name>
        <dbReference type="ChEBI" id="CHEBI:17843"/>
    </ligand>
</feature>
<feature type="binding site" evidence="1">
    <location>
        <position position="116"/>
    </location>
    <ligand>
        <name>tRNA</name>
        <dbReference type="ChEBI" id="CHEBI:17843"/>
    </ligand>
</feature>
<feature type="site" description="Discriminates between blocked and unblocked aminoacyl-tRNA" evidence="1">
    <location>
        <position position="12"/>
    </location>
</feature>
<feature type="site" description="Stabilizes the basic form of H active site to accept a proton" evidence="1">
    <location>
        <position position="95"/>
    </location>
</feature>
<protein>
    <recommendedName>
        <fullName evidence="1">Peptidyl-tRNA hydrolase</fullName>
        <shortName evidence="1">Pth</shortName>
        <ecNumber evidence="1">3.1.1.29</ecNumber>
    </recommendedName>
</protein>